<reference key="1">
    <citation type="journal article" date="1998" name="Nature">
        <title>The complete genome of the hyperthermophilic bacterium Aquifex aeolicus.</title>
        <authorList>
            <person name="Deckert G."/>
            <person name="Warren P.V."/>
            <person name="Gaasterland T."/>
            <person name="Young W.G."/>
            <person name="Lenox A.L."/>
            <person name="Graham D.E."/>
            <person name="Overbeek R."/>
            <person name="Snead M.A."/>
            <person name="Keller M."/>
            <person name="Aujay M."/>
            <person name="Huber R."/>
            <person name="Feldman R.A."/>
            <person name="Short J.M."/>
            <person name="Olsen G.J."/>
            <person name="Swanson R.V."/>
        </authorList>
    </citation>
    <scope>NUCLEOTIDE SEQUENCE [LARGE SCALE GENOMIC DNA]</scope>
    <source>
        <strain>VF5</strain>
    </source>
</reference>
<keyword id="KW-0031">Aminopeptidase</keyword>
<keyword id="KW-0378">Hydrolase</keyword>
<keyword id="KW-0479">Metal-binding</keyword>
<keyword id="KW-0645">Protease</keyword>
<keyword id="KW-1185">Reference proteome</keyword>
<gene>
    <name evidence="1" type="primary">map</name>
    <name type="ordered locus">aq_076</name>
</gene>
<name>MAP1_AQUAE</name>
<comment type="function">
    <text evidence="1">Removes the N-terminal methionine from nascent proteins. The N-terminal methionine is often cleaved when the second residue in the primary sequence is small and uncharged (Met-Ala-, Cys, Gly, Pro, Ser, Thr, or Val). Requires deformylation of the N(alpha)-formylated initiator methionine before it can be hydrolyzed.</text>
</comment>
<comment type="catalytic activity">
    <reaction evidence="1">
        <text>Release of N-terminal amino acids, preferentially methionine, from peptides and arylamides.</text>
        <dbReference type="EC" id="3.4.11.18"/>
    </reaction>
</comment>
<comment type="cofactor">
    <cofactor evidence="1">
        <name>Co(2+)</name>
        <dbReference type="ChEBI" id="CHEBI:48828"/>
    </cofactor>
    <cofactor evidence="1">
        <name>Zn(2+)</name>
        <dbReference type="ChEBI" id="CHEBI:29105"/>
    </cofactor>
    <cofactor evidence="1">
        <name>Mn(2+)</name>
        <dbReference type="ChEBI" id="CHEBI:29035"/>
    </cofactor>
    <cofactor evidence="1">
        <name>Fe(2+)</name>
        <dbReference type="ChEBI" id="CHEBI:29033"/>
    </cofactor>
    <text evidence="1">Binds 2 divalent metal cations per subunit. Has a high-affinity and a low affinity metal-binding site. The true nature of the physiological cofactor is under debate. The enzyme is active with cobalt, zinc, manganese or divalent iron ions. Most likely, methionine aminopeptidases function as mononuclear Fe(2+)-metalloproteases under physiological conditions, and the catalytically relevant metal-binding site has been assigned to the histidine-containing high-affinity site.</text>
</comment>
<comment type="subunit">
    <text evidence="1">Monomer.</text>
</comment>
<comment type="similarity">
    <text evidence="1">Belongs to the peptidase M24A family. Methionine aminopeptidase type 1 subfamily.</text>
</comment>
<protein>
    <recommendedName>
        <fullName evidence="1">Methionine aminopeptidase</fullName>
        <shortName evidence="1">MAP</shortName>
        <shortName evidence="1">MetAP</shortName>
        <ecNumber evidence="1">3.4.11.18</ecNumber>
    </recommendedName>
    <alternativeName>
        <fullName evidence="1">Peptidase M</fullName>
    </alternativeName>
</protein>
<feature type="chain" id="PRO_0000148924" description="Methionine aminopeptidase">
    <location>
        <begin position="1"/>
        <end position="258"/>
    </location>
</feature>
<feature type="binding site" evidence="1">
    <location>
        <position position="84"/>
    </location>
    <ligand>
        <name>substrate</name>
    </ligand>
</feature>
<feature type="binding site" evidence="1">
    <location>
        <position position="102"/>
    </location>
    <ligand>
        <name>a divalent metal cation</name>
        <dbReference type="ChEBI" id="CHEBI:60240"/>
        <label>1</label>
    </ligand>
</feature>
<feature type="binding site" evidence="1">
    <location>
        <position position="113"/>
    </location>
    <ligand>
        <name>a divalent metal cation</name>
        <dbReference type="ChEBI" id="CHEBI:60240"/>
        <label>1</label>
    </ligand>
</feature>
<feature type="binding site" evidence="1">
    <location>
        <position position="113"/>
    </location>
    <ligand>
        <name>a divalent metal cation</name>
        <dbReference type="ChEBI" id="CHEBI:60240"/>
        <label>2</label>
        <note>catalytic</note>
    </ligand>
</feature>
<feature type="binding site" evidence="1">
    <location>
        <position position="176"/>
    </location>
    <ligand>
        <name>a divalent metal cation</name>
        <dbReference type="ChEBI" id="CHEBI:60240"/>
        <label>2</label>
        <note>catalytic</note>
    </ligand>
</feature>
<feature type="binding site" evidence="1">
    <location>
        <position position="183"/>
    </location>
    <ligand>
        <name>substrate</name>
    </ligand>
</feature>
<feature type="binding site" evidence="1">
    <location>
        <position position="211"/>
    </location>
    <ligand>
        <name>a divalent metal cation</name>
        <dbReference type="ChEBI" id="CHEBI:60240"/>
        <label>2</label>
        <note>catalytic</note>
    </ligand>
</feature>
<feature type="binding site" evidence="1">
    <location>
        <position position="242"/>
    </location>
    <ligand>
        <name>a divalent metal cation</name>
        <dbReference type="ChEBI" id="CHEBI:60240"/>
        <label>1</label>
    </ligand>
</feature>
<feature type="binding site" evidence="1">
    <location>
        <position position="242"/>
    </location>
    <ligand>
        <name>a divalent metal cation</name>
        <dbReference type="ChEBI" id="CHEBI:60240"/>
        <label>2</label>
        <note>catalytic</note>
    </ligand>
</feature>
<dbReference type="EC" id="3.4.11.18" evidence="1"/>
<dbReference type="EMBL" id="AE000657">
    <property type="protein sequence ID" value="AAC06448.1"/>
    <property type="molecule type" value="Genomic_DNA"/>
</dbReference>
<dbReference type="PIR" id="F70307">
    <property type="entry name" value="F70307"/>
</dbReference>
<dbReference type="RefSeq" id="NP_213049.1">
    <property type="nucleotide sequence ID" value="NC_000918.1"/>
</dbReference>
<dbReference type="RefSeq" id="WP_010879987.1">
    <property type="nucleotide sequence ID" value="NC_000918.1"/>
</dbReference>
<dbReference type="SMR" id="O66489"/>
<dbReference type="FunCoup" id="O66489">
    <property type="interactions" value="425"/>
</dbReference>
<dbReference type="STRING" id="224324.aq_076"/>
<dbReference type="EnsemblBacteria" id="AAC06448">
    <property type="protein sequence ID" value="AAC06448"/>
    <property type="gene ID" value="aq_076"/>
</dbReference>
<dbReference type="KEGG" id="aae:aq_076"/>
<dbReference type="PATRIC" id="fig|224324.8.peg.67"/>
<dbReference type="eggNOG" id="COG0024">
    <property type="taxonomic scope" value="Bacteria"/>
</dbReference>
<dbReference type="HOGENOM" id="CLU_015857_0_1_0"/>
<dbReference type="InParanoid" id="O66489"/>
<dbReference type="OrthoDB" id="9802055at2"/>
<dbReference type="Proteomes" id="UP000000798">
    <property type="component" value="Chromosome"/>
</dbReference>
<dbReference type="GO" id="GO:0005829">
    <property type="term" value="C:cytosol"/>
    <property type="evidence" value="ECO:0000318"/>
    <property type="project" value="GO_Central"/>
</dbReference>
<dbReference type="GO" id="GO:0004239">
    <property type="term" value="F:initiator methionyl aminopeptidase activity"/>
    <property type="evidence" value="ECO:0007669"/>
    <property type="project" value="UniProtKB-UniRule"/>
</dbReference>
<dbReference type="GO" id="GO:0046872">
    <property type="term" value="F:metal ion binding"/>
    <property type="evidence" value="ECO:0007669"/>
    <property type="project" value="UniProtKB-UniRule"/>
</dbReference>
<dbReference type="GO" id="GO:0070006">
    <property type="term" value="F:metalloaminopeptidase activity"/>
    <property type="evidence" value="ECO:0000318"/>
    <property type="project" value="GO_Central"/>
</dbReference>
<dbReference type="GO" id="GO:0006508">
    <property type="term" value="P:proteolysis"/>
    <property type="evidence" value="ECO:0007669"/>
    <property type="project" value="UniProtKB-KW"/>
</dbReference>
<dbReference type="CDD" id="cd01086">
    <property type="entry name" value="MetAP1"/>
    <property type="match status" value="1"/>
</dbReference>
<dbReference type="Gene3D" id="3.90.230.10">
    <property type="entry name" value="Creatinase/methionine aminopeptidase superfamily"/>
    <property type="match status" value="1"/>
</dbReference>
<dbReference type="HAMAP" id="MF_01974">
    <property type="entry name" value="MetAP_1"/>
    <property type="match status" value="1"/>
</dbReference>
<dbReference type="InterPro" id="IPR036005">
    <property type="entry name" value="Creatinase/aminopeptidase-like"/>
</dbReference>
<dbReference type="InterPro" id="IPR000994">
    <property type="entry name" value="Pept_M24"/>
</dbReference>
<dbReference type="InterPro" id="IPR001714">
    <property type="entry name" value="Pept_M24_MAP"/>
</dbReference>
<dbReference type="InterPro" id="IPR002467">
    <property type="entry name" value="Pept_M24A_MAP1"/>
</dbReference>
<dbReference type="NCBIfam" id="TIGR00500">
    <property type="entry name" value="met_pdase_I"/>
    <property type="match status" value="1"/>
</dbReference>
<dbReference type="PANTHER" id="PTHR43330">
    <property type="entry name" value="METHIONINE AMINOPEPTIDASE"/>
    <property type="match status" value="1"/>
</dbReference>
<dbReference type="PANTHER" id="PTHR43330:SF27">
    <property type="entry name" value="METHIONINE AMINOPEPTIDASE"/>
    <property type="match status" value="1"/>
</dbReference>
<dbReference type="Pfam" id="PF00557">
    <property type="entry name" value="Peptidase_M24"/>
    <property type="match status" value="1"/>
</dbReference>
<dbReference type="PRINTS" id="PR00599">
    <property type="entry name" value="MAPEPTIDASE"/>
</dbReference>
<dbReference type="SUPFAM" id="SSF55920">
    <property type="entry name" value="Creatinase/aminopeptidase"/>
    <property type="match status" value="1"/>
</dbReference>
<dbReference type="PROSITE" id="PS00680">
    <property type="entry name" value="MAP_1"/>
    <property type="match status" value="1"/>
</dbReference>
<accession>O66489</accession>
<evidence type="ECO:0000255" key="1">
    <source>
        <dbReference type="HAMAP-Rule" id="MF_01974"/>
    </source>
</evidence>
<sequence>MAIELYSQREIEKIRKASQIVAEVLHIVAENVKPGVSTWDLEMIARKETEKRGAKPAFLGYKPPFSDVRYPAALCISINDEVVHGLPKKEKVIKEGDVVSIDFGAIYDGYAGDSAITVIAGKGSPEAQKLLEATKEALYNAIEKALPGKKVGDITKAIHETAEKYGFKTILRYGGHGVGRKVHQEPFVPNNVKDIGKKNPRLRQGMVIAIEPMLSIGTEETVEDGDGWTVKTKDGSLAAHFEHTVAITKKGPVILTEL</sequence>
<proteinExistence type="inferred from homology"/>
<organism>
    <name type="scientific">Aquifex aeolicus (strain VF5)</name>
    <dbReference type="NCBI Taxonomy" id="224324"/>
    <lineage>
        <taxon>Bacteria</taxon>
        <taxon>Pseudomonadati</taxon>
        <taxon>Aquificota</taxon>
        <taxon>Aquificia</taxon>
        <taxon>Aquificales</taxon>
        <taxon>Aquificaceae</taxon>
        <taxon>Aquifex</taxon>
    </lineage>
</organism>